<name>ALKB5_BOVIN</name>
<dbReference type="EC" id="1.14.11.53" evidence="2"/>
<dbReference type="EMBL" id="DAAA02048990">
    <property type="status" value="NOT_ANNOTATED_CDS"/>
    <property type="molecule type" value="Genomic_DNA"/>
</dbReference>
<dbReference type="RefSeq" id="NP_001192446.1">
    <property type="nucleotide sequence ID" value="NM_001205517.2"/>
</dbReference>
<dbReference type="SMR" id="E1BH29"/>
<dbReference type="FunCoup" id="E1BH29">
    <property type="interactions" value="1144"/>
</dbReference>
<dbReference type="STRING" id="9913.ENSBTAP00000034857"/>
<dbReference type="PaxDb" id="9913-ENSBTAP00000034857"/>
<dbReference type="GeneID" id="533303"/>
<dbReference type="KEGG" id="bta:533303"/>
<dbReference type="CTD" id="54890"/>
<dbReference type="eggNOG" id="KOG4176">
    <property type="taxonomic scope" value="Eukaryota"/>
</dbReference>
<dbReference type="HOGENOM" id="CLU_047472_1_0_1"/>
<dbReference type="InParanoid" id="E1BH29"/>
<dbReference type="OrthoDB" id="271595at2759"/>
<dbReference type="TreeFam" id="TF329212"/>
<dbReference type="Proteomes" id="UP000009136">
    <property type="component" value="Unplaced"/>
</dbReference>
<dbReference type="GO" id="GO:0016607">
    <property type="term" value="C:nuclear speck"/>
    <property type="evidence" value="ECO:0000250"/>
    <property type="project" value="UniProtKB"/>
</dbReference>
<dbReference type="GO" id="GO:0005634">
    <property type="term" value="C:nucleus"/>
    <property type="evidence" value="ECO:0000250"/>
    <property type="project" value="UniProtKB"/>
</dbReference>
<dbReference type="GO" id="GO:0042382">
    <property type="term" value="C:paraspeckles"/>
    <property type="evidence" value="ECO:0000250"/>
    <property type="project" value="UniProtKB"/>
</dbReference>
<dbReference type="GO" id="GO:0016706">
    <property type="term" value="F:2-oxoglutarate-dependent dioxygenase activity"/>
    <property type="evidence" value="ECO:0000250"/>
    <property type="project" value="UniProtKB"/>
</dbReference>
<dbReference type="GO" id="GO:0046872">
    <property type="term" value="F:metal ion binding"/>
    <property type="evidence" value="ECO:0007669"/>
    <property type="project" value="UniProtKB-KW"/>
</dbReference>
<dbReference type="GO" id="GO:0140693">
    <property type="term" value="F:molecular condensate scaffold activity"/>
    <property type="evidence" value="ECO:0000250"/>
    <property type="project" value="UniProtKB"/>
</dbReference>
<dbReference type="GO" id="GO:1990931">
    <property type="term" value="F:mRNA N6-methyladenosine dioxygenase activity"/>
    <property type="evidence" value="ECO:0000250"/>
    <property type="project" value="UniProtKB"/>
</dbReference>
<dbReference type="GO" id="GO:0035515">
    <property type="term" value="F:oxidative RNA demethylase activity"/>
    <property type="evidence" value="ECO:0000318"/>
    <property type="project" value="GO_Central"/>
</dbReference>
<dbReference type="GO" id="GO:0030154">
    <property type="term" value="P:cell differentiation"/>
    <property type="evidence" value="ECO:0007669"/>
    <property type="project" value="UniProtKB-KW"/>
</dbReference>
<dbReference type="GO" id="GO:0140694">
    <property type="term" value="P:membraneless organelle assembly"/>
    <property type="evidence" value="ECO:0000250"/>
    <property type="project" value="UniProtKB"/>
</dbReference>
<dbReference type="GO" id="GO:0061157">
    <property type="term" value="P:mRNA destabilization"/>
    <property type="evidence" value="ECO:0000250"/>
    <property type="project" value="UniProtKB"/>
</dbReference>
<dbReference type="GO" id="GO:0006397">
    <property type="term" value="P:mRNA processing"/>
    <property type="evidence" value="ECO:0007669"/>
    <property type="project" value="InterPro"/>
</dbReference>
<dbReference type="GO" id="GO:0010793">
    <property type="term" value="P:regulation of mRNA export from nucleus"/>
    <property type="evidence" value="ECO:0000250"/>
    <property type="project" value="UniProtKB"/>
</dbReference>
<dbReference type="GO" id="GO:0050684">
    <property type="term" value="P:regulation of mRNA processing"/>
    <property type="evidence" value="ECO:0000250"/>
    <property type="project" value="UniProtKB"/>
</dbReference>
<dbReference type="GO" id="GO:0006417">
    <property type="term" value="P:regulation of translation"/>
    <property type="evidence" value="ECO:0000250"/>
    <property type="project" value="UniProtKB"/>
</dbReference>
<dbReference type="GO" id="GO:0001666">
    <property type="term" value="P:response to hypoxia"/>
    <property type="evidence" value="ECO:0000250"/>
    <property type="project" value="UniProtKB"/>
</dbReference>
<dbReference type="GO" id="GO:0007283">
    <property type="term" value="P:spermatogenesis"/>
    <property type="evidence" value="ECO:0000250"/>
    <property type="project" value="UniProtKB"/>
</dbReference>
<dbReference type="FunFam" id="2.60.120.590:FF:000002">
    <property type="entry name" value="RNA demethylase ALKBH5"/>
    <property type="match status" value="1"/>
</dbReference>
<dbReference type="Gene3D" id="2.60.120.590">
    <property type="entry name" value="Alpha-ketoglutarate-dependent dioxygenase AlkB-like"/>
    <property type="match status" value="1"/>
</dbReference>
<dbReference type="InterPro" id="IPR027450">
    <property type="entry name" value="AlkB-like"/>
</dbReference>
<dbReference type="InterPro" id="IPR037151">
    <property type="entry name" value="AlkB-like_sf"/>
</dbReference>
<dbReference type="InterPro" id="IPR032860">
    <property type="entry name" value="ALKBH5"/>
</dbReference>
<dbReference type="PANTHER" id="PTHR32074">
    <property type="entry name" value="RNA DEMETHYLASE ALKBH5"/>
    <property type="match status" value="1"/>
</dbReference>
<dbReference type="PANTHER" id="PTHR32074:SF2">
    <property type="entry name" value="RNA DEMETHYLASE ALKBH5"/>
    <property type="match status" value="1"/>
</dbReference>
<dbReference type="Pfam" id="PF13532">
    <property type="entry name" value="2OG-FeII_Oxy_2"/>
    <property type="match status" value="1"/>
</dbReference>
<dbReference type="SUPFAM" id="SSF51197">
    <property type="entry name" value="Clavaminate synthase-like"/>
    <property type="match status" value="1"/>
</dbReference>
<comment type="function">
    <text evidence="1 2">Dioxygenase that specifically demethylates N(6)-methyladenosine (m6A) RNA, the most prevalent internal modification of messenger RNA (mRNA) in higher eukaryotes. Demethylates RNA by oxidative demethylation, which requires molecular oxygen, alpha-ketoglutarate and iron. Demethylation of m6A mRNA affects mRNA processing, translation and export. Can also demethylate N(6)-methyladenosine in single-stranded DNA (in vitro) (By similarity). Required for the late meiotic and haploid phases of spermatogenesis by mediating m6A demethylation in spermatocytes and round spermatids: m6A demethylation of target transcripts is required for correct splicing and the production of longer 3'-UTR mRNAs in male germ cells (By similarity). Involved in paraspeckle assembly, a nuclear membraneless organelle, by undergoing liquid-liquid phase separation. Paraspeckle assembly is coupled with m6A demethylation of RNAs, such as NEAT1 non-coding RNA (By similarity). Also acts as a negative regulator of T-cell development: inhibits gamma-delta T-cell proliferation via demethylation of JAG1 and NOTCH2 transcripts. Inhibits regulatory T-cell (Treg) recruitment by mediating demethylation and destabilization of CCL28 mRNAs (By similarity).</text>
</comment>
<comment type="catalytic activity">
    <reaction evidence="2">
        <text>an N(6)-methyladenosine in mRNA + 2-oxoglutarate + O2 = an adenosine in mRNA + formaldehyde + succinate + CO2</text>
        <dbReference type="Rhea" id="RHEA:49520"/>
        <dbReference type="Rhea" id="RHEA-COMP:12414"/>
        <dbReference type="Rhea" id="RHEA-COMP:12417"/>
        <dbReference type="ChEBI" id="CHEBI:15379"/>
        <dbReference type="ChEBI" id="CHEBI:16526"/>
        <dbReference type="ChEBI" id="CHEBI:16810"/>
        <dbReference type="ChEBI" id="CHEBI:16842"/>
        <dbReference type="ChEBI" id="CHEBI:30031"/>
        <dbReference type="ChEBI" id="CHEBI:74411"/>
        <dbReference type="ChEBI" id="CHEBI:74449"/>
        <dbReference type="EC" id="1.14.11.53"/>
    </reaction>
    <physiologicalReaction direction="left-to-right" evidence="2">
        <dbReference type="Rhea" id="RHEA:49521"/>
    </physiologicalReaction>
</comment>
<comment type="cofactor">
    <cofactor evidence="2">
        <name>Fe(2+)</name>
        <dbReference type="ChEBI" id="CHEBI:29033"/>
    </cofactor>
    <text evidence="2">Binds 1 Fe(2+) ion per subunit.</text>
</comment>
<comment type="activity regulation">
    <text evidence="2">RNA demethylase activity is inhibited following sumoylation. Inhibition is relieved following desumoylation.</text>
</comment>
<comment type="subunit">
    <text evidence="2">Monomer. Interacts with RBM33; promoting desumoylation by SENP1 and recruitment to N(6)-methyladenosine-containing mRNAs. Interacts (when acetylated by KAT8) with PSPC1; interaction facilitates recognition of N(6)-methyladenosine (m6A) mRNA.</text>
</comment>
<comment type="subcellular location">
    <subcellularLocation>
        <location evidence="2">Nucleus speckle</location>
    </subcellularLocation>
    <text evidence="2">Promotes formation and localizes to paraspeckles, a nuclear membraneless organelle.</text>
</comment>
<comment type="domain">
    <text evidence="2">The C-terminal disordered region undergoes liquid-liquid phase separation (LLPS) for the formation of paraspeckle membraneless compartment.</text>
</comment>
<comment type="PTM">
    <text evidence="2">Phosphorylated at Ser-87 and Ser-325 in response to reactive oxygen species (ROS), promoting sumoylation and inactivation.</text>
</comment>
<comment type="PTM">
    <text evidence="2">Acetylated by KAT8 at Lys-235, promoting interaction with PSPC1, thereby facilitating recognition of N(6)-methyladenosine (m6A) mRNA by ALKBH5. Deacetylated at Lys-235 by HDAC7.</text>
</comment>
<comment type="PTM">
    <text evidence="2">Sumoylated at Lys-86 and Lys-321 by PIAS4 following phosphorylation at Ser-87 and Ser-325 in response to reactive oxygen species (ROS), inhibiting the RNA demethylase activity. Desumoylated by SENP1; relieving RNA demethylase inhibition, leading to N(6)-methyladenosine-containing mRNAs demethylation.</text>
</comment>
<comment type="PTM">
    <text evidence="2">Ubiquitinated at Lys-57 via 'Lys-48'-linked polyubiquitin chain, leading to its degradation by the proteasome. Deubiquitinated at Lys-57 by USP9X, promoting its stabilizazion.</text>
</comment>
<comment type="similarity">
    <text evidence="5">Belongs to the alkB family.</text>
</comment>
<gene>
    <name type="primary">ALKBH5</name>
</gene>
<sequence>MAAASGYTDLREKLKSMTSRDNYKAGSREAAAAAAAAVAAAAAAAAAAEPYAAPGVKRKYPEDSDPERSDFEEQQLQKEEEARKVKSGIRQMRLFSQDECAKIEARIDEVVSRAEKGLYNEHTVDRAPLRNKYFFGEGYTYGAQLQKRGPGQERLYPPGDVDEIPEWVHQLVIQKLVEHRVIPEGFVNSAVINDYQPGGCIVSHVDPIHIFERPIVSVSFFSDSALCFGCKFQFKPIRVSEPVLSLPVRRGSVTVLSGYAADEITHCIRPQDIKERRAVIILRKTRLDAPRLETKSLSSSVLPPSYASDRLSGNNRDPALKPKRSHRKADPDAAHRPRILEMDKEENRRSVLLPAHRRAGRFSSENYRRKSYEPGEDCSEAAGSPARKVKMRRH</sequence>
<protein>
    <recommendedName>
        <fullName>RNA demethylase ALKBH5</fullName>
        <ecNumber evidence="2">1.14.11.53</ecNumber>
    </recommendedName>
    <alternativeName>
        <fullName>Alkylated DNA repair protein alkB homolog 5</fullName>
    </alternativeName>
    <alternativeName>
        <fullName>Alpha-ketoglutarate-dependent dioxygenase alkB homolog 5</fullName>
    </alternativeName>
</protein>
<keyword id="KW-0007">Acetylation</keyword>
<keyword id="KW-0175">Coiled coil</keyword>
<keyword id="KW-0221">Differentiation</keyword>
<keyword id="KW-0223">Dioxygenase</keyword>
<keyword id="KW-1015">Disulfide bond</keyword>
<keyword id="KW-0408">Iron</keyword>
<keyword id="KW-1017">Isopeptide bond</keyword>
<keyword id="KW-0479">Metal-binding</keyword>
<keyword id="KW-0539">Nucleus</keyword>
<keyword id="KW-0560">Oxidoreductase</keyword>
<keyword id="KW-0597">Phosphoprotein</keyword>
<keyword id="KW-1185">Reference proteome</keyword>
<keyword id="KW-0744">Spermatogenesis</keyword>
<keyword id="KW-0832">Ubl conjugation</keyword>
<evidence type="ECO:0000250" key="1">
    <source>
        <dbReference type="UniProtKB" id="Q3TSG4"/>
    </source>
</evidence>
<evidence type="ECO:0000250" key="2">
    <source>
        <dbReference type="UniProtKB" id="Q6P6C2"/>
    </source>
</evidence>
<evidence type="ECO:0000255" key="3"/>
<evidence type="ECO:0000256" key="4">
    <source>
        <dbReference type="SAM" id="MobiDB-lite"/>
    </source>
</evidence>
<evidence type="ECO:0000305" key="5"/>
<proteinExistence type="inferred from homology"/>
<accession>E1BH29</accession>
<organism>
    <name type="scientific">Bos taurus</name>
    <name type="common">Bovine</name>
    <dbReference type="NCBI Taxonomy" id="9913"/>
    <lineage>
        <taxon>Eukaryota</taxon>
        <taxon>Metazoa</taxon>
        <taxon>Chordata</taxon>
        <taxon>Craniata</taxon>
        <taxon>Vertebrata</taxon>
        <taxon>Euteleostomi</taxon>
        <taxon>Mammalia</taxon>
        <taxon>Eutheria</taxon>
        <taxon>Laurasiatheria</taxon>
        <taxon>Artiodactyla</taxon>
        <taxon>Ruminantia</taxon>
        <taxon>Pecora</taxon>
        <taxon>Bovidae</taxon>
        <taxon>Bovinae</taxon>
        <taxon>Bos</taxon>
    </lineage>
</organism>
<feature type="initiator methionine" description="Removed" evidence="2">
    <location>
        <position position="1"/>
    </location>
</feature>
<feature type="chain" id="PRO_0000421246" description="RNA demethylase ALKBH5">
    <location>
        <begin position="2"/>
        <end position="394"/>
    </location>
</feature>
<feature type="region of interest" description="Disordered" evidence="4">
    <location>
        <begin position="1"/>
        <end position="26"/>
    </location>
</feature>
<feature type="region of interest" description="Disordered" evidence="4">
    <location>
        <begin position="48"/>
        <end position="83"/>
    </location>
</feature>
<feature type="region of interest" description="Disordered" evidence="4">
    <location>
        <begin position="298"/>
        <end position="394"/>
    </location>
</feature>
<feature type="coiled-coil region" evidence="3">
    <location>
        <begin position="67"/>
        <end position="116"/>
    </location>
</feature>
<feature type="compositionally biased region" description="Basic and acidic residues" evidence="4">
    <location>
        <begin position="59"/>
        <end position="83"/>
    </location>
</feature>
<feature type="compositionally biased region" description="Basic and acidic residues" evidence="4">
    <location>
        <begin position="328"/>
        <end position="349"/>
    </location>
</feature>
<feature type="active site" evidence="2">
    <location>
        <position position="139"/>
    </location>
</feature>
<feature type="binding site" evidence="2">
    <location>
        <position position="193"/>
    </location>
    <ligand>
        <name>2-oxoglutarate</name>
        <dbReference type="ChEBI" id="CHEBI:16810"/>
    </ligand>
</feature>
<feature type="binding site" evidence="2">
    <location>
        <position position="195"/>
    </location>
    <ligand>
        <name>2-oxoglutarate</name>
        <dbReference type="ChEBI" id="CHEBI:16810"/>
    </ligand>
</feature>
<feature type="binding site" evidence="2">
    <location>
        <position position="204"/>
    </location>
    <ligand>
        <name>2-oxoglutarate</name>
        <dbReference type="ChEBI" id="CHEBI:16810"/>
    </ligand>
</feature>
<feature type="binding site" evidence="2">
    <location>
        <position position="266"/>
    </location>
    <ligand>
        <name>2-oxoglutarate</name>
        <dbReference type="ChEBI" id="CHEBI:16810"/>
    </ligand>
</feature>
<feature type="binding site" evidence="2">
    <location>
        <position position="277"/>
    </location>
    <ligand>
        <name>2-oxoglutarate</name>
        <dbReference type="ChEBI" id="CHEBI:16810"/>
    </ligand>
</feature>
<feature type="modified residue" description="N-acetylalanine" evidence="2">
    <location>
        <position position="2"/>
    </location>
</feature>
<feature type="modified residue" description="Phosphoserine" evidence="2">
    <location>
        <position position="64"/>
    </location>
</feature>
<feature type="modified residue" description="Phosphoserine" evidence="2">
    <location>
        <position position="69"/>
    </location>
</feature>
<feature type="modified residue" description="Phosphoserine" evidence="2">
    <location>
        <position position="87"/>
    </location>
</feature>
<feature type="modified residue" description="N6-acetyllysine" evidence="2">
    <location>
        <position position="132"/>
    </location>
</feature>
<feature type="modified residue" description="N6-acetyllysine" evidence="2">
    <location>
        <position position="235"/>
    </location>
</feature>
<feature type="modified residue" description="Phosphoserine" evidence="2">
    <location>
        <position position="325"/>
    </location>
</feature>
<feature type="modified residue" description="Phosphoserine" evidence="1">
    <location>
        <position position="371"/>
    </location>
</feature>
<feature type="modified residue" description="Phosphoserine" evidence="1">
    <location>
        <position position="384"/>
    </location>
</feature>
<feature type="disulfide bond" evidence="2">
    <location>
        <begin position="230"/>
        <end position="267"/>
    </location>
</feature>
<feature type="cross-link" description="Glycyl lysine isopeptide (Lys-Gly) (interchain with G-Cter in ubiquitin)" evidence="2">
    <location>
        <position position="57"/>
    </location>
</feature>
<feature type="cross-link" description="Glycyl lysine isopeptide (Lys-Gly) (interchain with G-Cter in SUMO1)" evidence="2">
    <location>
        <position position="86"/>
    </location>
</feature>
<feature type="cross-link" description="Glycyl lysine isopeptide (Lys-Gly) (interchain with G-Cter in SUMO1)" evidence="2">
    <location>
        <position position="321"/>
    </location>
</feature>
<feature type="cross-link" description="Glycyl lysine isopeptide (Lys-Gly) (interchain with G-Cter in SUMO2)" evidence="2">
    <location>
        <position position="328"/>
    </location>
</feature>
<reference key="1">
    <citation type="journal article" date="2009" name="Genome Biol.">
        <title>A whole-genome assembly of the domestic cow, Bos taurus.</title>
        <authorList>
            <person name="Zimin A.V."/>
            <person name="Delcher A.L."/>
            <person name="Florea L."/>
            <person name="Kelley D.R."/>
            <person name="Schatz M.C."/>
            <person name="Puiu D."/>
            <person name="Hanrahan F."/>
            <person name="Pertea G."/>
            <person name="Van Tassell C.P."/>
            <person name="Sonstegard T.S."/>
            <person name="Marcais G."/>
            <person name="Roberts M."/>
            <person name="Subramanian P."/>
            <person name="Yorke J.A."/>
            <person name="Salzberg S.L."/>
        </authorList>
    </citation>
    <scope>NUCLEOTIDE SEQUENCE [LARGE SCALE GENOMIC DNA]</scope>
    <source>
        <strain>Hereford</strain>
    </source>
</reference>